<comment type="function">
    <text evidence="1">Catalyzes the pyridoxal 5'-phosphate (PLP)-dependent condensation of succinyl-CoA and glycine to form aminolevulinic acid (ALA), with CoA and CO2 as by-products.</text>
</comment>
<comment type="catalytic activity">
    <reaction evidence="1">
        <text>succinyl-CoA + glycine + H(+) = 5-aminolevulinate + CO2 + CoA</text>
        <dbReference type="Rhea" id="RHEA:12921"/>
        <dbReference type="ChEBI" id="CHEBI:15378"/>
        <dbReference type="ChEBI" id="CHEBI:16526"/>
        <dbReference type="ChEBI" id="CHEBI:57287"/>
        <dbReference type="ChEBI" id="CHEBI:57292"/>
        <dbReference type="ChEBI" id="CHEBI:57305"/>
        <dbReference type="ChEBI" id="CHEBI:356416"/>
        <dbReference type="EC" id="2.3.1.37"/>
    </reaction>
    <physiologicalReaction direction="left-to-right" evidence="1">
        <dbReference type="Rhea" id="RHEA:12922"/>
    </physiologicalReaction>
</comment>
<comment type="cofactor">
    <cofactor evidence="1">
        <name>pyridoxal 5'-phosphate</name>
        <dbReference type="ChEBI" id="CHEBI:597326"/>
    </cofactor>
</comment>
<comment type="pathway">
    <text>Porphyrin-containing compound metabolism; protoporphyrin-IX biosynthesis; 5-aminolevulinate from glycine: step 1/1.</text>
</comment>
<comment type="subunit">
    <text evidence="3">Homodimer.</text>
</comment>
<comment type="subcellular location">
    <subcellularLocation>
        <location evidence="3">Mitochondrion inner membrane</location>
        <topology evidence="3">Peripheral membrane protein</topology>
    </subcellularLocation>
    <text evidence="3">Localizes to the matrix side of the mitochondrion inner membrane.</text>
</comment>
<comment type="similarity">
    <text evidence="5">Belongs to the class-II pyridoxal-phosphate-dependent aminotransferase family.</text>
</comment>
<organism>
    <name type="scientific">Opsanus tau</name>
    <name type="common">Oyster toadfish</name>
    <name type="synonym">Gadus tau</name>
    <dbReference type="NCBI Taxonomy" id="8068"/>
    <lineage>
        <taxon>Eukaryota</taxon>
        <taxon>Metazoa</taxon>
        <taxon>Chordata</taxon>
        <taxon>Craniata</taxon>
        <taxon>Vertebrata</taxon>
        <taxon>Euteleostomi</taxon>
        <taxon>Actinopterygii</taxon>
        <taxon>Neopterygii</taxon>
        <taxon>Teleostei</taxon>
        <taxon>Neoteleostei</taxon>
        <taxon>Acanthomorphata</taxon>
        <taxon>Batrachoidaria</taxon>
        <taxon>Batrachoididae</taxon>
        <taxon>Opsanus</taxon>
    </lineage>
</organism>
<evidence type="ECO:0000250" key="1">
    <source>
        <dbReference type="UniProtKB" id="P13196"/>
    </source>
</evidence>
<evidence type="ECO:0000250" key="2">
    <source>
        <dbReference type="UniProtKB" id="P18079"/>
    </source>
</evidence>
<evidence type="ECO:0000250" key="3">
    <source>
        <dbReference type="UniProtKB" id="P22557"/>
    </source>
</evidence>
<evidence type="ECO:0000255" key="4"/>
<evidence type="ECO:0000305" key="5"/>
<proteinExistence type="evidence at transcript level"/>
<name>HEM1_OPSTA</name>
<accession>P43091</accession>
<protein>
    <recommendedName>
        <fullName>5-aminolevulinate synthase, non-specific, mitochondrial</fullName>
        <shortName>ALAS-H</shortName>
        <ecNumber evidence="1">2.3.1.37</ecNumber>
    </recommendedName>
    <alternativeName>
        <fullName>5-aminolevulinic acid synthase 1</fullName>
    </alternativeName>
    <alternativeName>
        <fullName>Delta-ALA synthase 1</fullName>
    </alternativeName>
    <alternativeName>
        <fullName>Delta-aminolevulinate synthase 1</fullName>
    </alternativeName>
</protein>
<keyword id="KW-0012">Acyltransferase</keyword>
<keyword id="KW-0350">Heme biosynthesis</keyword>
<keyword id="KW-0379">Hydroxylation</keyword>
<keyword id="KW-0472">Membrane</keyword>
<keyword id="KW-0496">Mitochondrion</keyword>
<keyword id="KW-0999">Mitochondrion inner membrane</keyword>
<keyword id="KW-0663">Pyridoxal phosphate</keyword>
<keyword id="KW-0808">Transferase</keyword>
<keyword id="KW-0809">Transit peptide</keyword>
<feature type="transit peptide" description="Mitochondrion" evidence="4">
    <location>
        <begin position="1"/>
        <end position="58"/>
    </location>
</feature>
<feature type="chain" id="PRO_0000001234" description="5-aminolevulinate synthase, non-specific, mitochondrial">
    <location>
        <begin position="59"/>
        <end position="627"/>
    </location>
</feature>
<feature type="active site" evidence="2">
    <location>
        <position position="432"/>
    </location>
</feature>
<feature type="binding site" evidence="2">
    <location>
        <position position="204"/>
    </location>
    <ligand>
        <name>substrate</name>
    </ligand>
</feature>
<feature type="binding site" evidence="2">
    <location>
        <position position="321"/>
    </location>
    <ligand>
        <name>substrate</name>
    </ligand>
</feature>
<feature type="binding site" evidence="2">
    <location>
        <position position="340"/>
    </location>
    <ligand>
        <name>substrate</name>
    </ligand>
</feature>
<feature type="binding site" description="in other chain" evidence="2">
    <location>
        <position position="373"/>
    </location>
    <ligand>
        <name>pyridoxal 5'-phosphate</name>
        <dbReference type="ChEBI" id="CHEBI:597326"/>
        <note>ligand shared between dimeric partners</note>
    </ligand>
</feature>
<feature type="binding site" description="in other chain" evidence="2">
    <location>
        <position position="401"/>
    </location>
    <ligand>
        <name>pyridoxal 5'-phosphate</name>
        <dbReference type="ChEBI" id="CHEBI:597326"/>
        <note>ligand shared between dimeric partners</note>
    </ligand>
</feature>
<feature type="binding site" description="in other chain" evidence="2">
    <location>
        <position position="429"/>
    </location>
    <ligand>
        <name>pyridoxal 5'-phosphate</name>
        <dbReference type="ChEBI" id="CHEBI:597326"/>
        <note>ligand shared between dimeric partners</note>
    </ligand>
</feature>
<feature type="binding site" evidence="2">
    <location>
        <position position="461"/>
    </location>
    <ligand>
        <name>pyridoxal 5'-phosphate</name>
        <dbReference type="ChEBI" id="CHEBI:597326"/>
        <note>ligand shared between dimeric partners</note>
    </ligand>
</feature>
<feature type="binding site" evidence="2">
    <location>
        <position position="462"/>
    </location>
    <ligand>
        <name>pyridoxal 5'-phosphate</name>
        <dbReference type="ChEBI" id="CHEBI:597326"/>
        <note>ligand shared between dimeric partners</note>
    </ligand>
</feature>
<feature type="binding site" evidence="2">
    <location>
        <position position="549"/>
    </location>
    <ligand>
        <name>substrate</name>
    </ligand>
</feature>
<feature type="modified residue" description="N6-(pyridoxal phosphate)lysine" evidence="2">
    <location>
        <position position="432"/>
    </location>
</feature>
<gene>
    <name type="primary">alas1</name>
</gene>
<sequence length="627" mass="69691">MDVIVRRCPFLARVPQAFFQQSKKSLAVYAQRCPFMMELASKPMAPSLARALCSSSSSQQKIEDTMSTGEVLKPKAEAKLPVGLATPPSNEAVAPKCPFLAAEMGQNNSNVVRQVGVEFQEDVEEIRTVQKEVSPAQLEQPSLIGKTMGEEGHQKNLMKSLLKQRPKRVSHLLQDNLPGSFTRFYYDNFFEKKIEEKKSDHTYRVFKTVNRLANEFPMADDFTGSLEDKREVSVWCSNDYLGMSRHPRVAQAIMETLRKHGSGAGGTRNISGTSKFHVELEQELADLHRKDAALLFTSCFVANDSTLFTLAKMLPGCEIYSDAGNHASMIQGIRNSGAKKFIFRHNDVAHLRELLEKGDPTKPKIVAFETVHSMDGAVCPLEEMCDLAHEFGAITFVDEVHAVGLYGPRGGGIGDRDGIMHKMDIISGTLGKAFGCVGGYIASTATLVDTVRSYAAGFIFTTSLPPMLLAGAKQSIQILKGEEGCTLRRKHQRNVKLLRQMLMDSGLPVVHCPSHIIPIRVSDAEKNTKVCDLMMSHHNIYVQAINYPTVARGDELLRIAPTPHHTPEMMKYFVDRLVQTWKEVGLELKPHSSAECTFCQQPLHFEVMNEREKSYFSGLSHLVSVCA</sequence>
<reference key="1">
    <citation type="submission" date="1994-09" db="EMBL/GenBank/DDBJ databases">
        <title>Housekeeping form of 5-aminolevulinate synthase in the marine fish, Opsanus tau.</title>
        <authorList>
            <person name="Cornell N.W."/>
        </authorList>
    </citation>
    <scope>NUCLEOTIDE SEQUENCE [MRNA]</scope>
    <source>
        <tissue>Liver</tissue>
    </source>
</reference>
<dbReference type="EC" id="2.3.1.37" evidence="1"/>
<dbReference type="EMBL" id="L35915">
    <property type="protein sequence ID" value="AAA49435.1"/>
    <property type="molecule type" value="mRNA"/>
</dbReference>
<dbReference type="SMR" id="P43091"/>
<dbReference type="UniPathway" id="UPA00251">
    <property type="reaction ID" value="UER00375"/>
</dbReference>
<dbReference type="GO" id="GO:0005743">
    <property type="term" value="C:mitochondrial inner membrane"/>
    <property type="evidence" value="ECO:0007669"/>
    <property type="project" value="UniProtKB-SubCell"/>
</dbReference>
<dbReference type="GO" id="GO:0005759">
    <property type="term" value="C:mitochondrial matrix"/>
    <property type="evidence" value="ECO:0007669"/>
    <property type="project" value="InterPro"/>
</dbReference>
<dbReference type="GO" id="GO:0003870">
    <property type="term" value="F:5-aminolevulinate synthase activity"/>
    <property type="evidence" value="ECO:0000250"/>
    <property type="project" value="UniProtKB"/>
</dbReference>
<dbReference type="GO" id="GO:0030170">
    <property type="term" value="F:pyridoxal phosphate binding"/>
    <property type="evidence" value="ECO:0007669"/>
    <property type="project" value="InterPro"/>
</dbReference>
<dbReference type="GO" id="GO:0048821">
    <property type="term" value="P:erythrocyte development"/>
    <property type="evidence" value="ECO:0007669"/>
    <property type="project" value="TreeGrafter"/>
</dbReference>
<dbReference type="GO" id="GO:0042541">
    <property type="term" value="P:hemoglobin biosynthetic process"/>
    <property type="evidence" value="ECO:0007669"/>
    <property type="project" value="TreeGrafter"/>
</dbReference>
<dbReference type="GO" id="GO:0006782">
    <property type="term" value="P:protoporphyrinogen IX biosynthetic process"/>
    <property type="evidence" value="ECO:0007669"/>
    <property type="project" value="UniProtKB-UniPathway"/>
</dbReference>
<dbReference type="GO" id="GO:1903412">
    <property type="term" value="P:response to bile acid"/>
    <property type="evidence" value="ECO:0000250"/>
    <property type="project" value="UniProtKB"/>
</dbReference>
<dbReference type="CDD" id="cd06454">
    <property type="entry name" value="KBL_like"/>
    <property type="match status" value="1"/>
</dbReference>
<dbReference type="FunFam" id="3.90.1150.10:FF:000029">
    <property type="entry name" value="5-aminolevulinate synthase"/>
    <property type="match status" value="1"/>
</dbReference>
<dbReference type="FunFam" id="3.40.640.10:FF:000006">
    <property type="entry name" value="5-aminolevulinate synthase, mitochondrial"/>
    <property type="match status" value="1"/>
</dbReference>
<dbReference type="Gene3D" id="3.90.1150.10">
    <property type="entry name" value="Aspartate Aminotransferase, domain 1"/>
    <property type="match status" value="1"/>
</dbReference>
<dbReference type="Gene3D" id="3.40.640.10">
    <property type="entry name" value="Type I PLP-dependent aspartate aminotransferase-like (Major domain)"/>
    <property type="match status" value="1"/>
</dbReference>
<dbReference type="InterPro" id="IPR010961">
    <property type="entry name" value="4pyrrol_synth_NH2levulA_synth"/>
</dbReference>
<dbReference type="InterPro" id="IPR015118">
    <property type="entry name" value="5aminolev_synth_preseq"/>
</dbReference>
<dbReference type="InterPro" id="IPR001917">
    <property type="entry name" value="Aminotrans_II_pyridoxalP_BS"/>
</dbReference>
<dbReference type="InterPro" id="IPR004839">
    <property type="entry name" value="Aminotransferase_I/II_large"/>
</dbReference>
<dbReference type="InterPro" id="IPR050087">
    <property type="entry name" value="AON_synthase_class-II"/>
</dbReference>
<dbReference type="InterPro" id="IPR015424">
    <property type="entry name" value="PyrdxlP-dep_Trfase"/>
</dbReference>
<dbReference type="InterPro" id="IPR015421">
    <property type="entry name" value="PyrdxlP-dep_Trfase_major"/>
</dbReference>
<dbReference type="InterPro" id="IPR015422">
    <property type="entry name" value="PyrdxlP-dep_Trfase_small"/>
</dbReference>
<dbReference type="NCBIfam" id="TIGR01821">
    <property type="entry name" value="5aminolev_synth"/>
    <property type="match status" value="1"/>
</dbReference>
<dbReference type="PANTHER" id="PTHR13693:SF50">
    <property type="entry name" value="5-AMINOLEVULINATE SYNTHASE, NON-SPECIFIC, MITOCHONDRIAL"/>
    <property type="match status" value="1"/>
</dbReference>
<dbReference type="PANTHER" id="PTHR13693">
    <property type="entry name" value="CLASS II AMINOTRANSFERASE/8-AMINO-7-OXONONANOATE SYNTHASE"/>
    <property type="match status" value="1"/>
</dbReference>
<dbReference type="Pfam" id="PF00155">
    <property type="entry name" value="Aminotran_1_2"/>
    <property type="match status" value="1"/>
</dbReference>
<dbReference type="Pfam" id="PF09029">
    <property type="entry name" value="Preseq_ALAS"/>
    <property type="match status" value="1"/>
</dbReference>
<dbReference type="SUPFAM" id="SSF53383">
    <property type="entry name" value="PLP-dependent transferases"/>
    <property type="match status" value="1"/>
</dbReference>
<dbReference type="PROSITE" id="PS00599">
    <property type="entry name" value="AA_TRANSFER_CLASS_2"/>
    <property type="match status" value="1"/>
</dbReference>